<keyword id="KW-0238">DNA-binding</keyword>
<keyword id="KW-1185">Reference proteome</keyword>
<keyword id="KW-0804">Transcription</keyword>
<keyword id="KW-0889">Transcription antitermination</keyword>
<keyword id="KW-0805">Transcription regulation</keyword>
<protein>
    <recommendedName>
        <fullName evidence="1">Transcription antitermination protein RfaH</fullName>
    </recommendedName>
</protein>
<proteinExistence type="inferred from homology"/>
<reference key="1">
    <citation type="journal article" date="2001" name="Nature">
        <title>Genome sequence of enterohaemorrhagic Escherichia coli O157:H7.</title>
        <authorList>
            <person name="Perna N.T."/>
            <person name="Plunkett G. III"/>
            <person name="Burland V."/>
            <person name="Mau B."/>
            <person name="Glasner J.D."/>
            <person name="Rose D.J."/>
            <person name="Mayhew G.F."/>
            <person name="Evans P.S."/>
            <person name="Gregor J."/>
            <person name="Kirkpatrick H.A."/>
            <person name="Posfai G."/>
            <person name="Hackett J."/>
            <person name="Klink S."/>
            <person name="Boutin A."/>
            <person name="Shao Y."/>
            <person name="Miller L."/>
            <person name="Grotbeck E.J."/>
            <person name="Davis N.W."/>
            <person name="Lim A."/>
            <person name="Dimalanta E.T."/>
            <person name="Potamousis K."/>
            <person name="Apodaca J."/>
            <person name="Anantharaman T.S."/>
            <person name="Lin J."/>
            <person name="Yen G."/>
            <person name="Schwartz D.C."/>
            <person name="Welch R.A."/>
            <person name="Blattner F.R."/>
        </authorList>
    </citation>
    <scope>NUCLEOTIDE SEQUENCE [LARGE SCALE GENOMIC DNA]</scope>
    <source>
        <strain>O157:H7 / EDL933 / ATCC 700927 / EHEC</strain>
    </source>
</reference>
<reference key="2">
    <citation type="journal article" date="2001" name="DNA Res.">
        <title>Complete genome sequence of enterohemorrhagic Escherichia coli O157:H7 and genomic comparison with a laboratory strain K-12.</title>
        <authorList>
            <person name="Hayashi T."/>
            <person name="Makino K."/>
            <person name="Ohnishi M."/>
            <person name="Kurokawa K."/>
            <person name="Ishii K."/>
            <person name="Yokoyama K."/>
            <person name="Han C.-G."/>
            <person name="Ohtsubo E."/>
            <person name="Nakayama K."/>
            <person name="Murata T."/>
            <person name="Tanaka M."/>
            <person name="Tobe T."/>
            <person name="Iida T."/>
            <person name="Takami H."/>
            <person name="Honda T."/>
            <person name="Sasakawa C."/>
            <person name="Ogasawara N."/>
            <person name="Yasunaga T."/>
            <person name="Kuhara S."/>
            <person name="Shiba T."/>
            <person name="Hattori M."/>
            <person name="Shinagawa H."/>
        </authorList>
    </citation>
    <scope>NUCLEOTIDE SEQUENCE [LARGE SCALE GENOMIC DNA]</scope>
    <source>
        <strain>O157:H7 / Sakai / RIMD 0509952 / EHEC</strain>
    </source>
</reference>
<sequence>MQSWYLLYCKRGQLQRAQEHLERQAVNCLAPMITLEKIVRGKRTAVSEPLFPNYLFVEFDPEVIHTTTINATRGVSHFVRFGASPAIVPSAVIHQLSVYKPKDIVDPATPYPGDKVIITEGAFEGFQAIFTEPDGEARSMLLLNLINKEIKHSVKNTEFRKL</sequence>
<accession>P0AFW1</accession>
<accession>P26614</accession>
<name>RFAH_ECO57</name>
<organism>
    <name type="scientific">Escherichia coli O157:H7</name>
    <dbReference type="NCBI Taxonomy" id="83334"/>
    <lineage>
        <taxon>Bacteria</taxon>
        <taxon>Pseudomonadati</taxon>
        <taxon>Pseudomonadota</taxon>
        <taxon>Gammaproteobacteria</taxon>
        <taxon>Enterobacterales</taxon>
        <taxon>Enterobacteriaceae</taxon>
        <taxon>Escherichia</taxon>
    </lineage>
</organism>
<dbReference type="EMBL" id="AE005174">
    <property type="protein sequence ID" value="AAG59036.1"/>
    <property type="molecule type" value="Genomic_DNA"/>
</dbReference>
<dbReference type="EMBL" id="BA000007">
    <property type="protein sequence ID" value="BAB38193.1"/>
    <property type="molecule type" value="Genomic_DNA"/>
</dbReference>
<dbReference type="PIR" id="B91225">
    <property type="entry name" value="B91225"/>
</dbReference>
<dbReference type="PIR" id="H86071">
    <property type="entry name" value="H86071"/>
</dbReference>
<dbReference type="RefSeq" id="NP_312797.1">
    <property type="nucleotide sequence ID" value="NC_002695.1"/>
</dbReference>
<dbReference type="RefSeq" id="WP_001192396.1">
    <property type="nucleotide sequence ID" value="NZ_VOAI01000017.1"/>
</dbReference>
<dbReference type="BMRB" id="P0AFW1"/>
<dbReference type="SMR" id="P0AFW1"/>
<dbReference type="STRING" id="155864.Z5362"/>
<dbReference type="GeneID" id="86948508"/>
<dbReference type="GeneID" id="915134"/>
<dbReference type="KEGG" id="ece:Z5362"/>
<dbReference type="KEGG" id="ecs:ECs_4770"/>
<dbReference type="PATRIC" id="fig|386585.9.peg.4979"/>
<dbReference type="eggNOG" id="COG0250">
    <property type="taxonomic scope" value="Bacteria"/>
</dbReference>
<dbReference type="HOGENOM" id="CLU_067287_5_0_6"/>
<dbReference type="OMA" id="AVYVRSR"/>
<dbReference type="Proteomes" id="UP000000558">
    <property type="component" value="Chromosome"/>
</dbReference>
<dbReference type="Proteomes" id="UP000002519">
    <property type="component" value="Chromosome"/>
</dbReference>
<dbReference type="GO" id="GO:0005829">
    <property type="term" value="C:cytosol"/>
    <property type="evidence" value="ECO:0007669"/>
    <property type="project" value="TreeGrafter"/>
</dbReference>
<dbReference type="GO" id="GO:0003677">
    <property type="term" value="F:DNA binding"/>
    <property type="evidence" value="ECO:0007669"/>
    <property type="project" value="UniProtKB-UniRule"/>
</dbReference>
<dbReference type="GO" id="GO:0001073">
    <property type="term" value="F:transcription antitermination factor activity, DNA binding"/>
    <property type="evidence" value="ECO:0007669"/>
    <property type="project" value="UniProtKB-UniRule"/>
</dbReference>
<dbReference type="GO" id="GO:0140673">
    <property type="term" value="P:transcription elongation-coupled chromatin remodeling"/>
    <property type="evidence" value="ECO:0007669"/>
    <property type="project" value="InterPro"/>
</dbReference>
<dbReference type="CDD" id="cd09892">
    <property type="entry name" value="NGN_SP_RfaH"/>
    <property type="match status" value="1"/>
</dbReference>
<dbReference type="FunFam" id="3.30.70.940:FF:000004">
    <property type="entry name" value="Transcription antitermination protein RfaH"/>
    <property type="match status" value="1"/>
</dbReference>
<dbReference type="Gene3D" id="3.30.70.940">
    <property type="entry name" value="NusG, N-terminal domain"/>
    <property type="match status" value="1"/>
</dbReference>
<dbReference type="HAMAP" id="MF_00951">
    <property type="entry name" value="RfaH"/>
    <property type="match status" value="1"/>
</dbReference>
<dbReference type="InterPro" id="IPR006645">
    <property type="entry name" value="NGN-like_dom"/>
</dbReference>
<dbReference type="InterPro" id="IPR036735">
    <property type="entry name" value="NGN_dom_sf"/>
</dbReference>
<dbReference type="InterPro" id="IPR043425">
    <property type="entry name" value="NusG-like"/>
</dbReference>
<dbReference type="InterPro" id="IPR010215">
    <property type="entry name" value="Transcription_antiterm_RfaH"/>
</dbReference>
<dbReference type="NCBIfam" id="NF006534">
    <property type="entry name" value="PRK09014.1"/>
    <property type="match status" value="1"/>
</dbReference>
<dbReference type="NCBIfam" id="TIGR01955">
    <property type="entry name" value="RfaH"/>
    <property type="match status" value="1"/>
</dbReference>
<dbReference type="PANTHER" id="PTHR30265">
    <property type="entry name" value="RHO-INTERACTING TRANSCRIPTION TERMINATION FACTOR NUSG"/>
    <property type="match status" value="1"/>
</dbReference>
<dbReference type="PANTHER" id="PTHR30265:SF7">
    <property type="entry name" value="TRANSCRIPTION ANTITERMINATION PROTEIN RFAH"/>
    <property type="match status" value="1"/>
</dbReference>
<dbReference type="Pfam" id="PF02357">
    <property type="entry name" value="NusG"/>
    <property type="match status" value="1"/>
</dbReference>
<dbReference type="SMART" id="SM00738">
    <property type="entry name" value="NGN"/>
    <property type="match status" value="1"/>
</dbReference>
<dbReference type="SUPFAM" id="SSF82679">
    <property type="entry name" value="N-utilization substance G protein NusG, N-terminal domain"/>
    <property type="match status" value="1"/>
</dbReference>
<evidence type="ECO:0000255" key="1">
    <source>
        <dbReference type="HAMAP-Rule" id="MF_00951"/>
    </source>
</evidence>
<feature type="chain" id="PRO_0000097282" description="Transcription antitermination protein RfaH">
    <location>
        <begin position="1"/>
        <end position="162"/>
    </location>
</feature>
<gene>
    <name evidence="1" type="primary">rfaH</name>
    <name type="synonym">hlyT</name>
    <name type="synonym">sfrB</name>
    <name type="ordered locus">Z5362</name>
    <name type="ordered locus">ECs4770</name>
</gene>
<comment type="function">
    <text evidence="1">Enhances distal genes transcription elongation in a specialized subset of operons that encode extracytoplasmic components. RfaH is recruited into a multi-component RNA polymerase complex by the ops element, which is a short conserved DNA sequence located downstream of the main promoter of these operons. Once bound, RfaH suppresses pausing and inhibits Rho-dependent and intrinsic termination at a subset of sites. Termination signals are bypassed, which allows complete synthesis of long RNA chains.</text>
</comment>
<comment type="subunit">
    <text evidence="1">Interacts with both the nontemplate DNA and the RNA polymerase (RNAP).</text>
</comment>
<comment type="similarity">
    <text evidence="1">Belongs to the RfaH family.</text>
</comment>